<sequence length="473" mass="52419">MAIITEEEEDPKTLNPPKNKPKDSDFTKSESTMKNPKPQSQNPFPFWFYFTVVVSLATIIFISLSLFSSQNDPRSWFLSLPPALRQHYSNGRTIKVQVNSNESPIEVFVAESGSIHTETVVIVHGLGLSSFAFKEMIQSLGSKGIHSVAIDLPGNGFSDKSMVVIGGDREIGFVARVKEVYGLIQEKGVFWAFDQMIETGDLPYEEIIKLQNSKRRSFKAIELGSEETARVLGQVIDTLGLAPVHLVLHDSALGLASNWVSENWQSVRSVTLIDSSISPALPLWVLNVPGIREILLAFSFGFEKLVSFRCSKEMTLSDIDAHRILLKGRNGREAVVASLNKLNHSFDIAQWGNSDGINGIPMQVIWSSEASKEWSDEGQRVAKALPKAKFVTHSGSRWPQESKSGELADYISEFVSLLPKSIRRVAEEPIPEEVQKVLEEAKAGDDHDHHHGHGHAHAGYSDAYGLGEEWTTT</sequence>
<proteinExistence type="evidence at protein level"/>
<dbReference type="EMBL" id="AC064840">
    <property type="protein sequence ID" value="AAG00878.1"/>
    <property type="molecule type" value="Genomic_DNA"/>
</dbReference>
<dbReference type="EMBL" id="AC069144">
    <property type="protein sequence ID" value="AAG51115.1"/>
    <property type="molecule type" value="Genomic_DNA"/>
</dbReference>
<dbReference type="EMBL" id="CP002684">
    <property type="protein sequence ID" value="AEE33170.1"/>
    <property type="molecule type" value="Genomic_DNA"/>
</dbReference>
<dbReference type="EMBL" id="AY074334">
    <property type="protein sequence ID" value="AAL67030.1"/>
    <property type="molecule type" value="mRNA"/>
</dbReference>
<dbReference type="EMBL" id="AY122984">
    <property type="protein sequence ID" value="AAM67517.1"/>
    <property type="molecule type" value="mRNA"/>
</dbReference>
<dbReference type="EMBL" id="AF424608">
    <property type="protein sequence ID" value="AAL11602.1"/>
    <property type="status" value="ALT_INIT"/>
    <property type="molecule type" value="mRNA"/>
</dbReference>
<dbReference type="PIR" id="D96591">
    <property type="entry name" value="D96591"/>
</dbReference>
<dbReference type="RefSeq" id="NP_564672.2">
    <property type="nucleotide sequence ID" value="NM_104373.2"/>
</dbReference>
<dbReference type="BioGRID" id="27166">
    <property type="interactions" value="2"/>
</dbReference>
<dbReference type="FunCoup" id="Q9FZ33">
    <property type="interactions" value="1997"/>
</dbReference>
<dbReference type="IntAct" id="Q9FZ33">
    <property type="interactions" value="3"/>
</dbReference>
<dbReference type="STRING" id="3702.Q9FZ33"/>
<dbReference type="ESTHER" id="arath-AXR4">
    <property type="family name" value="Auxin-response-4"/>
</dbReference>
<dbReference type="PaxDb" id="3702-AT1G54990.1"/>
<dbReference type="ProteomicsDB" id="240942"/>
<dbReference type="EnsemblPlants" id="AT1G54990.1">
    <property type="protein sequence ID" value="AT1G54990.1"/>
    <property type="gene ID" value="AT1G54990"/>
</dbReference>
<dbReference type="GeneID" id="841941"/>
<dbReference type="Gramene" id="AT1G54990.1">
    <property type="protein sequence ID" value="AT1G54990.1"/>
    <property type="gene ID" value="AT1G54990"/>
</dbReference>
<dbReference type="KEGG" id="ath:AT1G54990"/>
<dbReference type="Araport" id="AT1G54990"/>
<dbReference type="TAIR" id="AT1G54990">
    <property type="gene designation" value="AXR4"/>
</dbReference>
<dbReference type="eggNOG" id="ENOG502QUCP">
    <property type="taxonomic scope" value="Eukaryota"/>
</dbReference>
<dbReference type="HOGENOM" id="CLU_039117_0_0_1"/>
<dbReference type="InParanoid" id="Q9FZ33"/>
<dbReference type="OMA" id="ANWVLEN"/>
<dbReference type="OrthoDB" id="6431331at2759"/>
<dbReference type="PhylomeDB" id="Q9FZ33"/>
<dbReference type="PRO" id="PR:Q9FZ33"/>
<dbReference type="Proteomes" id="UP000006548">
    <property type="component" value="Chromosome 1"/>
</dbReference>
<dbReference type="ExpressionAtlas" id="Q9FZ33">
    <property type="expression patterns" value="baseline and differential"/>
</dbReference>
<dbReference type="GO" id="GO:0005783">
    <property type="term" value="C:endoplasmic reticulum"/>
    <property type="evidence" value="ECO:0000314"/>
    <property type="project" value="TAIR"/>
</dbReference>
<dbReference type="GO" id="GO:0005789">
    <property type="term" value="C:endoplasmic reticulum membrane"/>
    <property type="evidence" value="ECO:0007669"/>
    <property type="project" value="UniProtKB-SubCell"/>
</dbReference>
<dbReference type="GO" id="GO:0005739">
    <property type="term" value="C:mitochondrion"/>
    <property type="evidence" value="ECO:0007005"/>
    <property type="project" value="TAIR"/>
</dbReference>
<dbReference type="GO" id="GO:0005634">
    <property type="term" value="C:nucleus"/>
    <property type="evidence" value="ECO:0007005"/>
    <property type="project" value="TAIR"/>
</dbReference>
<dbReference type="GO" id="GO:0000325">
    <property type="term" value="C:plant-type vacuole"/>
    <property type="evidence" value="ECO:0007005"/>
    <property type="project" value="TAIR"/>
</dbReference>
<dbReference type="GO" id="GO:0009926">
    <property type="term" value="P:auxin polar transport"/>
    <property type="evidence" value="ECO:0000315"/>
    <property type="project" value="TAIR"/>
</dbReference>
<dbReference type="GO" id="GO:0009733">
    <property type="term" value="P:response to auxin"/>
    <property type="evidence" value="ECO:0000315"/>
    <property type="project" value="TAIR"/>
</dbReference>
<dbReference type="GO" id="GO:0009612">
    <property type="term" value="P:response to mechanical stimulus"/>
    <property type="evidence" value="ECO:0000315"/>
    <property type="project" value="TAIR"/>
</dbReference>
<dbReference type="Gene3D" id="3.40.50.1820">
    <property type="entry name" value="alpha/beta hydrolase"/>
    <property type="match status" value="1"/>
</dbReference>
<dbReference type="InterPro" id="IPR000073">
    <property type="entry name" value="AB_hydrolase_1"/>
</dbReference>
<dbReference type="InterPro" id="IPR029058">
    <property type="entry name" value="AB_hydrolase_fold"/>
</dbReference>
<dbReference type="PANTHER" id="PTHR43329">
    <property type="entry name" value="EPOXIDE HYDROLASE"/>
    <property type="match status" value="1"/>
</dbReference>
<dbReference type="Pfam" id="PF00561">
    <property type="entry name" value="Abhydrolase_1"/>
    <property type="match status" value="1"/>
</dbReference>
<dbReference type="SUPFAM" id="SSF53474">
    <property type="entry name" value="alpha/beta-Hydrolases"/>
    <property type="match status" value="1"/>
</dbReference>
<reference key="1">
    <citation type="journal article" date="2000" name="Nature">
        <title>Sequence and analysis of chromosome 1 of the plant Arabidopsis thaliana.</title>
        <authorList>
            <person name="Theologis A."/>
            <person name="Ecker J.R."/>
            <person name="Palm C.J."/>
            <person name="Federspiel N.A."/>
            <person name="Kaul S."/>
            <person name="White O."/>
            <person name="Alonso J."/>
            <person name="Altafi H."/>
            <person name="Araujo R."/>
            <person name="Bowman C.L."/>
            <person name="Brooks S.Y."/>
            <person name="Buehler E."/>
            <person name="Chan A."/>
            <person name="Chao Q."/>
            <person name="Chen H."/>
            <person name="Cheuk R.F."/>
            <person name="Chin C.W."/>
            <person name="Chung M.K."/>
            <person name="Conn L."/>
            <person name="Conway A.B."/>
            <person name="Conway A.R."/>
            <person name="Creasy T.H."/>
            <person name="Dewar K."/>
            <person name="Dunn P."/>
            <person name="Etgu P."/>
            <person name="Feldblyum T.V."/>
            <person name="Feng J.-D."/>
            <person name="Fong B."/>
            <person name="Fujii C.Y."/>
            <person name="Gill J.E."/>
            <person name="Goldsmith A.D."/>
            <person name="Haas B."/>
            <person name="Hansen N.F."/>
            <person name="Hughes B."/>
            <person name="Huizar L."/>
            <person name="Hunter J.L."/>
            <person name="Jenkins J."/>
            <person name="Johnson-Hopson C."/>
            <person name="Khan S."/>
            <person name="Khaykin E."/>
            <person name="Kim C.J."/>
            <person name="Koo H.L."/>
            <person name="Kremenetskaia I."/>
            <person name="Kurtz D.B."/>
            <person name="Kwan A."/>
            <person name="Lam B."/>
            <person name="Langin-Hooper S."/>
            <person name="Lee A."/>
            <person name="Lee J.M."/>
            <person name="Lenz C.A."/>
            <person name="Li J.H."/>
            <person name="Li Y.-P."/>
            <person name="Lin X."/>
            <person name="Liu S.X."/>
            <person name="Liu Z.A."/>
            <person name="Luros J.S."/>
            <person name="Maiti R."/>
            <person name="Marziali A."/>
            <person name="Militscher J."/>
            <person name="Miranda M."/>
            <person name="Nguyen M."/>
            <person name="Nierman W.C."/>
            <person name="Osborne B.I."/>
            <person name="Pai G."/>
            <person name="Peterson J."/>
            <person name="Pham P.K."/>
            <person name="Rizzo M."/>
            <person name="Rooney T."/>
            <person name="Rowley D."/>
            <person name="Sakano H."/>
            <person name="Salzberg S.L."/>
            <person name="Schwartz J.R."/>
            <person name="Shinn P."/>
            <person name="Southwick A.M."/>
            <person name="Sun H."/>
            <person name="Tallon L.J."/>
            <person name="Tambunga G."/>
            <person name="Toriumi M.J."/>
            <person name="Town C.D."/>
            <person name="Utterback T."/>
            <person name="Van Aken S."/>
            <person name="Vaysberg M."/>
            <person name="Vysotskaia V.S."/>
            <person name="Walker M."/>
            <person name="Wu D."/>
            <person name="Yu G."/>
            <person name="Fraser C.M."/>
            <person name="Venter J.C."/>
            <person name="Davis R.W."/>
        </authorList>
    </citation>
    <scope>NUCLEOTIDE SEQUENCE [LARGE SCALE GENOMIC DNA]</scope>
    <source>
        <strain>cv. Columbia</strain>
    </source>
</reference>
<reference key="2">
    <citation type="journal article" date="2017" name="Plant J.">
        <title>Araport11: a complete reannotation of the Arabidopsis thaliana reference genome.</title>
        <authorList>
            <person name="Cheng C.Y."/>
            <person name="Krishnakumar V."/>
            <person name="Chan A.P."/>
            <person name="Thibaud-Nissen F."/>
            <person name="Schobel S."/>
            <person name="Town C.D."/>
        </authorList>
    </citation>
    <scope>GENOME REANNOTATION</scope>
    <source>
        <strain>cv. Columbia</strain>
    </source>
</reference>
<reference key="3">
    <citation type="journal article" date="2003" name="Science">
        <title>Empirical analysis of transcriptional activity in the Arabidopsis genome.</title>
        <authorList>
            <person name="Yamada K."/>
            <person name="Lim J."/>
            <person name="Dale J.M."/>
            <person name="Chen H."/>
            <person name="Shinn P."/>
            <person name="Palm C.J."/>
            <person name="Southwick A.M."/>
            <person name="Wu H.C."/>
            <person name="Kim C.J."/>
            <person name="Nguyen M."/>
            <person name="Pham P.K."/>
            <person name="Cheuk R.F."/>
            <person name="Karlin-Newmann G."/>
            <person name="Liu S.X."/>
            <person name="Lam B."/>
            <person name="Sakano H."/>
            <person name="Wu T."/>
            <person name="Yu G."/>
            <person name="Miranda M."/>
            <person name="Quach H.L."/>
            <person name="Tripp M."/>
            <person name="Chang C.H."/>
            <person name="Lee J.M."/>
            <person name="Toriumi M.J."/>
            <person name="Chan M.M."/>
            <person name="Tang C.C."/>
            <person name="Onodera C.S."/>
            <person name="Deng J.M."/>
            <person name="Akiyama K."/>
            <person name="Ansari Y."/>
            <person name="Arakawa T."/>
            <person name="Banh J."/>
            <person name="Banno F."/>
            <person name="Bowser L."/>
            <person name="Brooks S.Y."/>
            <person name="Carninci P."/>
            <person name="Chao Q."/>
            <person name="Choy N."/>
            <person name="Enju A."/>
            <person name="Goldsmith A.D."/>
            <person name="Gurjal M."/>
            <person name="Hansen N.F."/>
            <person name="Hayashizaki Y."/>
            <person name="Johnson-Hopson C."/>
            <person name="Hsuan V.W."/>
            <person name="Iida K."/>
            <person name="Karnes M."/>
            <person name="Khan S."/>
            <person name="Koesema E."/>
            <person name="Ishida J."/>
            <person name="Jiang P.X."/>
            <person name="Jones T."/>
            <person name="Kawai J."/>
            <person name="Kamiya A."/>
            <person name="Meyers C."/>
            <person name="Nakajima M."/>
            <person name="Narusaka M."/>
            <person name="Seki M."/>
            <person name="Sakurai T."/>
            <person name="Satou M."/>
            <person name="Tamse R."/>
            <person name="Vaysberg M."/>
            <person name="Wallender E.K."/>
            <person name="Wong C."/>
            <person name="Yamamura Y."/>
            <person name="Yuan S."/>
            <person name="Shinozaki K."/>
            <person name="Davis R.W."/>
            <person name="Theologis A."/>
            <person name="Ecker J.R."/>
        </authorList>
    </citation>
    <scope>NUCLEOTIDE SEQUENCE [LARGE SCALE MRNA]</scope>
    <source>
        <strain>cv. Columbia</strain>
    </source>
</reference>
<reference key="4">
    <citation type="journal article" date="2006" name="Science">
        <title>AXR4 is required for localization of the auxin influx facilitator AUX1.</title>
        <authorList>
            <person name="Dharmasiri S."/>
            <person name="Swarup R."/>
            <person name="Mockaitis K."/>
            <person name="Dharmasiri N."/>
            <person name="Singh S.K."/>
            <person name="Kowalchyk M."/>
            <person name="Marchant A."/>
            <person name="Mills S."/>
            <person name="Sandberg G."/>
            <person name="Bennett M.J."/>
            <person name="Estelle M."/>
        </authorList>
    </citation>
    <scope>FUNCTION</scope>
    <scope>TISSUE SPECIFICITY</scope>
    <scope>SUBCELLULAR LOCATION</scope>
    <scope>DISRUPTION PHENOTYPE</scope>
</reference>
<feature type="chain" id="PRO_0000300097" description="Protein AUXIN RESPONSE 4">
    <location>
        <begin position="1"/>
        <end position="473"/>
    </location>
</feature>
<feature type="transmembrane region" description="Helical" evidence="1">
    <location>
        <begin position="44"/>
        <end position="64"/>
    </location>
</feature>
<feature type="domain" description="AB hydrolase-1" evidence="1">
    <location>
        <begin position="119"/>
        <end position="283"/>
    </location>
</feature>
<feature type="region of interest" description="Disordered" evidence="2">
    <location>
        <begin position="1"/>
        <end position="38"/>
    </location>
</feature>
<feature type="compositionally biased region" description="Acidic residues" evidence="2">
    <location>
        <begin position="1"/>
        <end position="10"/>
    </location>
</feature>
<feature type="compositionally biased region" description="Polar residues" evidence="2">
    <location>
        <begin position="29"/>
        <end position="38"/>
    </location>
</feature>
<gene>
    <name type="primary">AXR4</name>
    <name type="ordered locus">At1g54990</name>
    <name type="ORF">F14C21.51</name>
    <name type="ORF">T24C10.10</name>
</gene>
<name>AXR4_ARATH</name>
<protein>
    <recommendedName>
        <fullName>Protein AUXIN RESPONSE 4</fullName>
    </recommendedName>
</protein>
<evidence type="ECO:0000255" key="1"/>
<evidence type="ECO:0000256" key="2">
    <source>
        <dbReference type="SAM" id="MobiDB-lite"/>
    </source>
</evidence>
<evidence type="ECO:0000269" key="3">
    <source>
    </source>
</evidence>
<evidence type="ECO:0000305" key="4"/>
<accession>Q9FZ33</accession>
<accession>Q944Q7</accession>
<comment type="function">
    <text evidence="3">Required for the auxin influx facilitator AUX1 polar trafficking and its asymmetric localization within the plasma membrane. Not involved in the PIN proteins localization.</text>
</comment>
<comment type="interaction">
    <interactant intactId="EBI-25514394">
        <id>Q9FZ33</id>
    </interactant>
    <interactant intactId="EBI-16935343">
        <id>Q96247</id>
        <label>AUX1</label>
    </interactant>
    <organismsDiffer>false</organismsDiffer>
    <experiments>5</experiments>
</comment>
<comment type="subcellular location">
    <subcellularLocation>
        <location evidence="3">Endoplasmic reticulum membrane</location>
        <topology evidence="3">Single-pass membrane protein</topology>
    </subcellularLocation>
</comment>
<comment type="tissue specificity">
    <text evidence="3">Most abundant in root tissue, lesser amounts in rosette leaves, stems and flowers and very little in mature siliques.</text>
</comment>
<comment type="disruption phenotype">
    <text evidence="3">Plants show reduced gravitropism, auxin-resistant root growth and AUX1 accumulation in the endoplasmic reticulum.</text>
</comment>
<comment type="sequence caution" evidence="4">
    <conflict type="erroneous initiation">
        <sequence resource="EMBL-CDS" id="AAL11602"/>
    </conflict>
</comment>
<organism>
    <name type="scientific">Arabidopsis thaliana</name>
    <name type="common">Mouse-ear cress</name>
    <dbReference type="NCBI Taxonomy" id="3702"/>
    <lineage>
        <taxon>Eukaryota</taxon>
        <taxon>Viridiplantae</taxon>
        <taxon>Streptophyta</taxon>
        <taxon>Embryophyta</taxon>
        <taxon>Tracheophyta</taxon>
        <taxon>Spermatophyta</taxon>
        <taxon>Magnoliopsida</taxon>
        <taxon>eudicotyledons</taxon>
        <taxon>Gunneridae</taxon>
        <taxon>Pentapetalae</taxon>
        <taxon>rosids</taxon>
        <taxon>malvids</taxon>
        <taxon>Brassicales</taxon>
        <taxon>Brassicaceae</taxon>
        <taxon>Camelineae</taxon>
        <taxon>Arabidopsis</taxon>
    </lineage>
</organism>
<keyword id="KW-0256">Endoplasmic reticulum</keyword>
<keyword id="KW-0472">Membrane</keyword>
<keyword id="KW-1185">Reference proteome</keyword>
<keyword id="KW-0812">Transmembrane</keyword>
<keyword id="KW-1133">Transmembrane helix</keyword>